<reference key="1">
    <citation type="journal article" date="2004" name="Proc. Natl. Acad. Sci. U.S.A.">
        <title>Structural flexibility in the Burkholderia mallei genome.</title>
        <authorList>
            <person name="Nierman W.C."/>
            <person name="DeShazer D."/>
            <person name="Kim H.S."/>
            <person name="Tettelin H."/>
            <person name="Nelson K.E."/>
            <person name="Feldblyum T.V."/>
            <person name="Ulrich R.L."/>
            <person name="Ronning C.M."/>
            <person name="Brinkac L.M."/>
            <person name="Daugherty S.C."/>
            <person name="Davidsen T.D."/>
            <person name="DeBoy R.T."/>
            <person name="Dimitrov G."/>
            <person name="Dodson R.J."/>
            <person name="Durkin A.S."/>
            <person name="Gwinn M.L."/>
            <person name="Haft D.H."/>
            <person name="Khouri H.M."/>
            <person name="Kolonay J.F."/>
            <person name="Madupu R."/>
            <person name="Mohammoud Y."/>
            <person name="Nelson W.C."/>
            <person name="Radune D."/>
            <person name="Romero C.M."/>
            <person name="Sarria S."/>
            <person name="Selengut J."/>
            <person name="Shamblin C."/>
            <person name="Sullivan S.A."/>
            <person name="White O."/>
            <person name="Yu Y."/>
            <person name="Zafar N."/>
            <person name="Zhou L."/>
            <person name="Fraser C.M."/>
        </authorList>
    </citation>
    <scope>NUCLEOTIDE SEQUENCE [LARGE SCALE GENOMIC DNA]</scope>
    <source>
        <strain>ATCC 23344</strain>
    </source>
</reference>
<organism>
    <name type="scientific">Burkholderia mallei (strain ATCC 23344)</name>
    <dbReference type="NCBI Taxonomy" id="243160"/>
    <lineage>
        <taxon>Bacteria</taxon>
        <taxon>Pseudomonadati</taxon>
        <taxon>Pseudomonadota</taxon>
        <taxon>Betaproteobacteria</taxon>
        <taxon>Burkholderiales</taxon>
        <taxon>Burkholderiaceae</taxon>
        <taxon>Burkholderia</taxon>
        <taxon>pseudomallei group</taxon>
    </lineage>
</organism>
<comment type="function">
    <text evidence="1">3'-to-5' exoribonuclease specific for small oligoribonucleotides.</text>
</comment>
<comment type="subcellular location">
    <subcellularLocation>
        <location evidence="1">Cytoplasm</location>
    </subcellularLocation>
</comment>
<comment type="similarity">
    <text evidence="1">Belongs to the oligoribonuclease family.</text>
</comment>
<accession>Q62M61</accession>
<name>ORN_BURMA</name>
<protein>
    <recommendedName>
        <fullName evidence="1">Oligoribonuclease</fullName>
        <ecNumber evidence="1">3.1.15.-</ecNumber>
    </recommendedName>
</protein>
<keyword id="KW-0963">Cytoplasm</keyword>
<keyword id="KW-0269">Exonuclease</keyword>
<keyword id="KW-0378">Hydrolase</keyword>
<keyword id="KW-0540">Nuclease</keyword>
<keyword id="KW-1185">Reference proteome</keyword>
<sequence length="201" mass="22580">MTDISAVAGQPALVRNELNLVWLDMEMTGLDPDTDRIIEIAVVVTNSTLDIAVEGPVLAIHQSDETLAKMDDWNKNTHGRSGLIDRVRASSVTEADAAAQIAAFLAEHVPPGKSPMCGNSICQDRRFMARWMPELERFFHYRNLDVSTLKELCRRWQPAIYKGFQKRAMHTALADIHESIDELKYYRERFLIPAAPAGETA</sequence>
<proteinExistence type="inferred from homology"/>
<evidence type="ECO:0000255" key="1">
    <source>
        <dbReference type="HAMAP-Rule" id="MF_00045"/>
    </source>
</evidence>
<feature type="chain" id="PRO_0000111025" description="Oligoribonuclease">
    <location>
        <begin position="1"/>
        <end position="201"/>
    </location>
</feature>
<feature type="domain" description="Exonuclease" evidence="1">
    <location>
        <begin position="20"/>
        <end position="183"/>
    </location>
</feature>
<feature type="active site" evidence="1">
    <location>
        <position position="141"/>
    </location>
</feature>
<dbReference type="EC" id="3.1.15.-" evidence="1"/>
<dbReference type="EMBL" id="CP000010">
    <property type="protein sequence ID" value="AAU48769.1"/>
    <property type="molecule type" value="Genomic_DNA"/>
</dbReference>
<dbReference type="RefSeq" id="WP_004189767.1">
    <property type="nucleotide sequence ID" value="NC_006348.1"/>
</dbReference>
<dbReference type="RefSeq" id="YP_102207.1">
    <property type="nucleotide sequence ID" value="NC_006348.1"/>
</dbReference>
<dbReference type="SMR" id="Q62M61"/>
<dbReference type="GeneID" id="92978164"/>
<dbReference type="KEGG" id="bma:BMA0392"/>
<dbReference type="PATRIC" id="fig|243160.12.peg.398"/>
<dbReference type="eggNOG" id="COG1949">
    <property type="taxonomic scope" value="Bacteria"/>
</dbReference>
<dbReference type="HOGENOM" id="CLU_064761_2_0_4"/>
<dbReference type="Proteomes" id="UP000006693">
    <property type="component" value="Chromosome 1"/>
</dbReference>
<dbReference type="GO" id="GO:0005737">
    <property type="term" value="C:cytoplasm"/>
    <property type="evidence" value="ECO:0007669"/>
    <property type="project" value="UniProtKB-SubCell"/>
</dbReference>
<dbReference type="GO" id="GO:0000175">
    <property type="term" value="F:3'-5'-RNA exonuclease activity"/>
    <property type="evidence" value="ECO:0007669"/>
    <property type="project" value="InterPro"/>
</dbReference>
<dbReference type="GO" id="GO:0003676">
    <property type="term" value="F:nucleic acid binding"/>
    <property type="evidence" value="ECO:0007669"/>
    <property type="project" value="InterPro"/>
</dbReference>
<dbReference type="GO" id="GO:0006259">
    <property type="term" value="P:DNA metabolic process"/>
    <property type="evidence" value="ECO:0007669"/>
    <property type="project" value="UniProtKB-ARBA"/>
</dbReference>
<dbReference type="CDD" id="cd06135">
    <property type="entry name" value="Orn"/>
    <property type="match status" value="1"/>
</dbReference>
<dbReference type="FunFam" id="3.30.420.10:FF:000003">
    <property type="entry name" value="Oligoribonuclease"/>
    <property type="match status" value="1"/>
</dbReference>
<dbReference type="Gene3D" id="3.30.420.10">
    <property type="entry name" value="Ribonuclease H-like superfamily/Ribonuclease H"/>
    <property type="match status" value="1"/>
</dbReference>
<dbReference type="HAMAP" id="MF_00045">
    <property type="entry name" value="Oligoribonuclease"/>
    <property type="match status" value="1"/>
</dbReference>
<dbReference type="InterPro" id="IPR013520">
    <property type="entry name" value="Exonuclease_RNaseT/DNA_pol3"/>
</dbReference>
<dbReference type="InterPro" id="IPR022894">
    <property type="entry name" value="Oligoribonuclease"/>
</dbReference>
<dbReference type="InterPro" id="IPR012337">
    <property type="entry name" value="RNaseH-like_sf"/>
</dbReference>
<dbReference type="InterPro" id="IPR036397">
    <property type="entry name" value="RNaseH_sf"/>
</dbReference>
<dbReference type="NCBIfam" id="NF003765">
    <property type="entry name" value="PRK05359.1"/>
    <property type="match status" value="1"/>
</dbReference>
<dbReference type="PANTHER" id="PTHR11046">
    <property type="entry name" value="OLIGORIBONUCLEASE, MITOCHONDRIAL"/>
    <property type="match status" value="1"/>
</dbReference>
<dbReference type="PANTHER" id="PTHR11046:SF0">
    <property type="entry name" value="OLIGORIBONUCLEASE, MITOCHONDRIAL"/>
    <property type="match status" value="1"/>
</dbReference>
<dbReference type="Pfam" id="PF00929">
    <property type="entry name" value="RNase_T"/>
    <property type="match status" value="1"/>
</dbReference>
<dbReference type="SMART" id="SM00479">
    <property type="entry name" value="EXOIII"/>
    <property type="match status" value="1"/>
</dbReference>
<dbReference type="SUPFAM" id="SSF53098">
    <property type="entry name" value="Ribonuclease H-like"/>
    <property type="match status" value="1"/>
</dbReference>
<gene>
    <name evidence="1" type="primary">orn</name>
    <name type="ordered locus">BMA0392</name>
</gene>